<sequence length="663" mass="72443">MSDRSSLFDVRSSTSVTLDQVVRRDTVEIPDEAALAMPVQPLSFWQGGARRATALTQDMNLRRWMLGLMTIAMGVAGWKASFDTIALGGVTRLEAVVLTLLAPLFLALSLWFCTALIGFVVLMGRPKDPLGIDSEAPMPKLHTRTAILMPVYNEDAAAVFARLRAMDASIAETGSARNFDIFVISDTRDAQVALAEQACFARFRREANCNVYYRIRKENTGRKAGNVADWVSRWGSAYEHMLVLDADSLMTGEAMVRLADAMERHPGAGLIQTMPMIINGQTIFARTLQFATRLYGRVAWTGLAWWSGSESSFWGHNAIVRTRAFAETCGLPHLPGPKPFGGEVMSHDALESALLRRGGWSVHLAPYLDGSYEESPSNLLDFATRDRRWCRGNIQHVPLIALPGLHWMSRMHLVIGVLSYALSPLWFFCLSAGLISRALMPELKKAAFTMADLKAAAHALIDWSEIQATAWAMIITFVLLFGPKILGAILVLARKGEVKGFGGKRRMAAGLGVEMLLSALVAPMLMFTQTRAIVEILAGKVGGWAAQRRDADKVDFKEAWAAMGWISLSGLILAASFWFTPDLLTATAPILAGLVLAVPLTMLGAHKVAGLKLKANGLFMTPEERRPPAIVRAAVGAACEPPIRWFARNGRPIGPTTKIRDAA</sequence>
<dbReference type="EC" id="2.4.1.-" evidence="1"/>
<dbReference type="EMBL" id="CP001340">
    <property type="protein sequence ID" value="ACL95562.1"/>
    <property type="molecule type" value="Genomic_DNA"/>
</dbReference>
<dbReference type="RefSeq" id="YP_002517470.1">
    <property type="nucleotide sequence ID" value="NC_011916.1"/>
</dbReference>
<dbReference type="CAZy" id="GT2">
    <property type="family name" value="Glycosyltransferase Family 2"/>
</dbReference>
<dbReference type="GeneID" id="7330403"/>
<dbReference type="KEGG" id="ccs:CCNA_02097"/>
<dbReference type="PATRIC" id="fig|565050.3.peg.2056"/>
<dbReference type="HOGENOM" id="CLU_015730_1_0_5"/>
<dbReference type="OrthoDB" id="9775281at2"/>
<dbReference type="PhylomeDB" id="B8GX72"/>
<dbReference type="UniPathway" id="UPA00637"/>
<dbReference type="Proteomes" id="UP000001364">
    <property type="component" value="Chromosome"/>
</dbReference>
<dbReference type="GO" id="GO:0005886">
    <property type="term" value="C:plasma membrane"/>
    <property type="evidence" value="ECO:0007669"/>
    <property type="project" value="UniProtKB-SubCell"/>
</dbReference>
<dbReference type="GO" id="GO:0016758">
    <property type="term" value="F:hexosyltransferase activity"/>
    <property type="evidence" value="ECO:0007669"/>
    <property type="project" value="UniProtKB-UniRule"/>
</dbReference>
<dbReference type="GO" id="GO:0009250">
    <property type="term" value="P:glucan biosynthetic process"/>
    <property type="evidence" value="ECO:0007669"/>
    <property type="project" value="UniProtKB-UniRule"/>
</dbReference>
<dbReference type="CDD" id="cd04191">
    <property type="entry name" value="Glucan_BSP_MdoH"/>
    <property type="match status" value="1"/>
</dbReference>
<dbReference type="Gene3D" id="3.90.550.10">
    <property type="entry name" value="Spore Coat Polysaccharide Biosynthesis Protein SpsA, Chain A"/>
    <property type="match status" value="1"/>
</dbReference>
<dbReference type="HAMAP" id="MF_01072">
    <property type="entry name" value="MdoH_OpgH"/>
    <property type="match status" value="1"/>
</dbReference>
<dbReference type="InterPro" id="IPR023725">
    <property type="entry name" value="Glucans_biosynth_gluTrFase_H"/>
</dbReference>
<dbReference type="InterPro" id="IPR001173">
    <property type="entry name" value="Glyco_trans_2-like"/>
</dbReference>
<dbReference type="InterPro" id="IPR050321">
    <property type="entry name" value="Glycosyltr_2/OpgH_subfam"/>
</dbReference>
<dbReference type="InterPro" id="IPR029044">
    <property type="entry name" value="Nucleotide-diphossugar_trans"/>
</dbReference>
<dbReference type="NCBIfam" id="NF003958">
    <property type="entry name" value="PRK05454.2-1"/>
    <property type="match status" value="1"/>
</dbReference>
<dbReference type="NCBIfam" id="NF003962">
    <property type="entry name" value="PRK05454.2-5"/>
    <property type="match status" value="1"/>
</dbReference>
<dbReference type="PANTHER" id="PTHR43867">
    <property type="entry name" value="CELLULOSE SYNTHASE CATALYTIC SUBUNIT A [UDP-FORMING]"/>
    <property type="match status" value="1"/>
</dbReference>
<dbReference type="PANTHER" id="PTHR43867:SF5">
    <property type="entry name" value="GLUCANS BIOSYNTHESIS GLUCOSYLTRANSFERASE H"/>
    <property type="match status" value="1"/>
</dbReference>
<dbReference type="Pfam" id="PF13632">
    <property type="entry name" value="Glyco_trans_2_3"/>
    <property type="match status" value="1"/>
</dbReference>
<dbReference type="SUPFAM" id="SSF53448">
    <property type="entry name" value="Nucleotide-diphospho-sugar transferases"/>
    <property type="match status" value="1"/>
</dbReference>
<reference key="1">
    <citation type="journal article" date="2010" name="J. Bacteriol.">
        <title>The genetic basis of laboratory adaptation in Caulobacter crescentus.</title>
        <authorList>
            <person name="Marks M.E."/>
            <person name="Castro-Rojas C.M."/>
            <person name="Teiling C."/>
            <person name="Du L."/>
            <person name="Kapatral V."/>
            <person name="Walunas T.L."/>
            <person name="Crosson S."/>
        </authorList>
    </citation>
    <scope>NUCLEOTIDE SEQUENCE [LARGE SCALE GENOMIC DNA]</scope>
    <source>
        <strain>NA1000 / CB15N</strain>
    </source>
</reference>
<name>OPGH_CAUVN</name>
<feature type="chain" id="PRO_1000149760" description="Glucans biosynthesis glucosyltransferase H">
    <location>
        <begin position="1"/>
        <end position="663"/>
    </location>
</feature>
<feature type="transmembrane region" description="Helical" evidence="1">
    <location>
        <begin position="65"/>
        <end position="85"/>
    </location>
</feature>
<feature type="transmembrane region" description="Helical" evidence="1">
    <location>
        <begin position="104"/>
        <end position="124"/>
    </location>
</feature>
<feature type="transmembrane region" description="Helical" evidence="1">
    <location>
        <begin position="415"/>
        <end position="435"/>
    </location>
</feature>
<feature type="transmembrane region" description="Helical" evidence="1">
    <location>
        <begin position="472"/>
        <end position="492"/>
    </location>
</feature>
<feature type="transmembrane region" description="Helical" evidence="1">
    <location>
        <begin position="507"/>
        <end position="527"/>
    </location>
</feature>
<feature type="transmembrane region" description="Helical" evidence="1">
    <location>
        <begin position="559"/>
        <end position="579"/>
    </location>
</feature>
<feature type="transmembrane region" description="Helical" evidence="1">
    <location>
        <begin position="583"/>
        <end position="603"/>
    </location>
</feature>
<accession>B8GX72</accession>
<proteinExistence type="inferred from homology"/>
<evidence type="ECO:0000255" key="1">
    <source>
        <dbReference type="HAMAP-Rule" id="MF_01072"/>
    </source>
</evidence>
<gene>
    <name evidence="1" type="primary">opgH</name>
    <name type="ordered locus">CCNA_02097</name>
</gene>
<keyword id="KW-0997">Cell inner membrane</keyword>
<keyword id="KW-1003">Cell membrane</keyword>
<keyword id="KW-0328">Glycosyltransferase</keyword>
<keyword id="KW-0472">Membrane</keyword>
<keyword id="KW-1185">Reference proteome</keyword>
<keyword id="KW-0808">Transferase</keyword>
<keyword id="KW-0812">Transmembrane</keyword>
<keyword id="KW-1133">Transmembrane helix</keyword>
<organism>
    <name type="scientific">Caulobacter vibrioides (strain NA1000 / CB15N)</name>
    <name type="common">Caulobacter crescentus</name>
    <dbReference type="NCBI Taxonomy" id="565050"/>
    <lineage>
        <taxon>Bacteria</taxon>
        <taxon>Pseudomonadati</taxon>
        <taxon>Pseudomonadota</taxon>
        <taxon>Alphaproteobacteria</taxon>
        <taxon>Caulobacterales</taxon>
        <taxon>Caulobacteraceae</taxon>
        <taxon>Caulobacter</taxon>
    </lineage>
</organism>
<protein>
    <recommendedName>
        <fullName evidence="1">Glucans biosynthesis glucosyltransferase H</fullName>
        <ecNumber evidence="1">2.4.1.-</ecNumber>
    </recommendedName>
</protein>
<comment type="function">
    <text evidence="1">Involved in the biosynthesis of osmoregulated periplasmic glucans (OPGs).</text>
</comment>
<comment type="pathway">
    <text evidence="1">Glycan metabolism; osmoregulated periplasmic glucan (OPG) biosynthesis.</text>
</comment>
<comment type="subcellular location">
    <subcellularLocation>
        <location evidence="1">Cell inner membrane</location>
        <topology evidence="1">Multi-pass membrane protein</topology>
    </subcellularLocation>
</comment>
<comment type="similarity">
    <text evidence="1">Belongs to the glycosyltransferase 2 family. OpgH subfamily.</text>
</comment>